<accession>A8LYN0</accession>
<protein>
    <recommendedName>
        <fullName evidence="1">Chaperonin GroEL 1</fullName>
        <ecNumber evidence="1">5.6.1.7</ecNumber>
    </recommendedName>
    <alternativeName>
        <fullName evidence="1">60 kDa chaperonin 1</fullName>
    </alternativeName>
    <alternativeName>
        <fullName evidence="1">Chaperonin-60 1</fullName>
        <shortName evidence="1">Cpn60 1</shortName>
    </alternativeName>
</protein>
<proteinExistence type="inferred from homology"/>
<gene>
    <name evidence="1" type="primary">groEL1</name>
    <name evidence="1" type="synonym">groL1</name>
    <name type="ordered locus">Sare_0311</name>
</gene>
<evidence type="ECO:0000255" key="1">
    <source>
        <dbReference type="HAMAP-Rule" id="MF_00600"/>
    </source>
</evidence>
<name>CH601_SALAI</name>
<dbReference type="EC" id="5.6.1.7" evidence="1"/>
<dbReference type="EMBL" id="CP000850">
    <property type="protein sequence ID" value="ABV96241.1"/>
    <property type="molecule type" value="Genomic_DNA"/>
</dbReference>
<dbReference type="SMR" id="A8LYN0"/>
<dbReference type="STRING" id="391037.Sare_0311"/>
<dbReference type="KEGG" id="saq:Sare_0311"/>
<dbReference type="PATRIC" id="fig|391037.6.peg.318"/>
<dbReference type="eggNOG" id="COG0459">
    <property type="taxonomic scope" value="Bacteria"/>
</dbReference>
<dbReference type="HOGENOM" id="CLU_016503_3_0_11"/>
<dbReference type="OrthoDB" id="9766614at2"/>
<dbReference type="GO" id="GO:0005737">
    <property type="term" value="C:cytoplasm"/>
    <property type="evidence" value="ECO:0007669"/>
    <property type="project" value="UniProtKB-SubCell"/>
</dbReference>
<dbReference type="GO" id="GO:0005524">
    <property type="term" value="F:ATP binding"/>
    <property type="evidence" value="ECO:0007669"/>
    <property type="project" value="UniProtKB-UniRule"/>
</dbReference>
<dbReference type="GO" id="GO:0140662">
    <property type="term" value="F:ATP-dependent protein folding chaperone"/>
    <property type="evidence" value="ECO:0007669"/>
    <property type="project" value="InterPro"/>
</dbReference>
<dbReference type="GO" id="GO:0016853">
    <property type="term" value="F:isomerase activity"/>
    <property type="evidence" value="ECO:0007669"/>
    <property type="project" value="UniProtKB-KW"/>
</dbReference>
<dbReference type="GO" id="GO:0051082">
    <property type="term" value="F:unfolded protein binding"/>
    <property type="evidence" value="ECO:0007669"/>
    <property type="project" value="UniProtKB-UniRule"/>
</dbReference>
<dbReference type="GO" id="GO:0042026">
    <property type="term" value="P:protein refolding"/>
    <property type="evidence" value="ECO:0007669"/>
    <property type="project" value="UniProtKB-UniRule"/>
</dbReference>
<dbReference type="CDD" id="cd03344">
    <property type="entry name" value="GroEL"/>
    <property type="match status" value="1"/>
</dbReference>
<dbReference type="FunFam" id="3.50.7.10:FF:000001">
    <property type="entry name" value="60 kDa chaperonin"/>
    <property type="match status" value="1"/>
</dbReference>
<dbReference type="Gene3D" id="3.50.7.10">
    <property type="entry name" value="GroEL"/>
    <property type="match status" value="1"/>
</dbReference>
<dbReference type="Gene3D" id="1.10.560.10">
    <property type="entry name" value="GroEL-like equatorial domain"/>
    <property type="match status" value="1"/>
</dbReference>
<dbReference type="Gene3D" id="3.30.260.10">
    <property type="entry name" value="TCP-1-like chaperonin intermediate domain"/>
    <property type="match status" value="1"/>
</dbReference>
<dbReference type="HAMAP" id="MF_00600">
    <property type="entry name" value="CH60"/>
    <property type="match status" value="1"/>
</dbReference>
<dbReference type="InterPro" id="IPR018370">
    <property type="entry name" value="Chaperonin_Cpn60_CS"/>
</dbReference>
<dbReference type="InterPro" id="IPR001844">
    <property type="entry name" value="Cpn60/GroEL"/>
</dbReference>
<dbReference type="InterPro" id="IPR002423">
    <property type="entry name" value="Cpn60/GroEL/TCP-1"/>
</dbReference>
<dbReference type="InterPro" id="IPR027409">
    <property type="entry name" value="GroEL-like_apical_dom_sf"/>
</dbReference>
<dbReference type="InterPro" id="IPR027413">
    <property type="entry name" value="GROEL-like_equatorial_sf"/>
</dbReference>
<dbReference type="InterPro" id="IPR027410">
    <property type="entry name" value="TCP-1-like_intermed_sf"/>
</dbReference>
<dbReference type="NCBIfam" id="TIGR02348">
    <property type="entry name" value="GroEL"/>
    <property type="match status" value="1"/>
</dbReference>
<dbReference type="NCBIfam" id="NF000592">
    <property type="entry name" value="PRK00013.1"/>
    <property type="match status" value="1"/>
</dbReference>
<dbReference type="NCBIfam" id="NF009487">
    <property type="entry name" value="PRK12849.1"/>
    <property type="match status" value="1"/>
</dbReference>
<dbReference type="NCBIfam" id="NF009488">
    <property type="entry name" value="PRK12850.1"/>
    <property type="match status" value="1"/>
</dbReference>
<dbReference type="NCBIfam" id="NF009489">
    <property type="entry name" value="PRK12851.1"/>
    <property type="match status" value="1"/>
</dbReference>
<dbReference type="PANTHER" id="PTHR45633">
    <property type="entry name" value="60 KDA HEAT SHOCK PROTEIN, MITOCHONDRIAL"/>
    <property type="match status" value="1"/>
</dbReference>
<dbReference type="Pfam" id="PF00118">
    <property type="entry name" value="Cpn60_TCP1"/>
    <property type="match status" value="1"/>
</dbReference>
<dbReference type="PRINTS" id="PR00298">
    <property type="entry name" value="CHAPERONIN60"/>
</dbReference>
<dbReference type="SUPFAM" id="SSF52029">
    <property type="entry name" value="GroEL apical domain-like"/>
    <property type="match status" value="1"/>
</dbReference>
<dbReference type="SUPFAM" id="SSF48592">
    <property type="entry name" value="GroEL equatorial domain-like"/>
    <property type="match status" value="1"/>
</dbReference>
<dbReference type="SUPFAM" id="SSF54849">
    <property type="entry name" value="GroEL-intermediate domain like"/>
    <property type="match status" value="1"/>
</dbReference>
<dbReference type="PROSITE" id="PS00296">
    <property type="entry name" value="CHAPERONINS_CPN60"/>
    <property type="match status" value="1"/>
</dbReference>
<keyword id="KW-0067">ATP-binding</keyword>
<keyword id="KW-0143">Chaperone</keyword>
<keyword id="KW-0963">Cytoplasm</keyword>
<keyword id="KW-0413">Isomerase</keyword>
<keyword id="KW-0547">Nucleotide-binding</keyword>
<organism>
    <name type="scientific">Salinispora arenicola (strain CNS-205)</name>
    <dbReference type="NCBI Taxonomy" id="391037"/>
    <lineage>
        <taxon>Bacteria</taxon>
        <taxon>Bacillati</taxon>
        <taxon>Actinomycetota</taxon>
        <taxon>Actinomycetes</taxon>
        <taxon>Micromonosporales</taxon>
        <taxon>Micromonosporaceae</taxon>
        <taxon>Salinispora</taxon>
    </lineage>
</organism>
<feature type="chain" id="PRO_0000332070" description="Chaperonin GroEL 1">
    <location>
        <begin position="1"/>
        <end position="540"/>
    </location>
</feature>
<feature type="binding site" evidence="1">
    <location>
        <begin position="29"/>
        <end position="32"/>
    </location>
    <ligand>
        <name>ATP</name>
        <dbReference type="ChEBI" id="CHEBI:30616"/>
    </ligand>
</feature>
<feature type="binding site" evidence="1">
    <location>
        <begin position="86"/>
        <end position="90"/>
    </location>
    <ligand>
        <name>ATP</name>
        <dbReference type="ChEBI" id="CHEBI:30616"/>
    </ligand>
</feature>
<feature type="binding site" evidence="1">
    <location>
        <position position="413"/>
    </location>
    <ligand>
        <name>ATP</name>
        <dbReference type="ChEBI" id="CHEBI:30616"/>
    </ligand>
</feature>
<feature type="binding site" evidence="1">
    <location>
        <begin position="477"/>
        <end position="479"/>
    </location>
    <ligand>
        <name>ATP</name>
        <dbReference type="ChEBI" id="CHEBI:30616"/>
    </ligand>
</feature>
<feature type="binding site" evidence="1">
    <location>
        <position position="493"/>
    </location>
    <ligand>
        <name>ATP</name>
        <dbReference type="ChEBI" id="CHEBI:30616"/>
    </ligand>
</feature>
<reference key="1">
    <citation type="submission" date="2007-10" db="EMBL/GenBank/DDBJ databases">
        <title>Complete sequence of Salinispora arenicola CNS-205.</title>
        <authorList>
            <consortium name="US DOE Joint Genome Institute"/>
            <person name="Copeland A."/>
            <person name="Lucas S."/>
            <person name="Lapidus A."/>
            <person name="Barry K."/>
            <person name="Glavina del Rio T."/>
            <person name="Dalin E."/>
            <person name="Tice H."/>
            <person name="Pitluck S."/>
            <person name="Foster B."/>
            <person name="Schmutz J."/>
            <person name="Larimer F."/>
            <person name="Land M."/>
            <person name="Hauser L."/>
            <person name="Kyrpides N."/>
            <person name="Ivanova N."/>
            <person name="Jensen P.R."/>
            <person name="Moore B.S."/>
            <person name="Penn K."/>
            <person name="Jenkins C."/>
            <person name="Udwary D."/>
            <person name="Xiang L."/>
            <person name="Gontang E."/>
            <person name="Richardson P."/>
        </authorList>
    </citation>
    <scope>NUCLEOTIDE SEQUENCE [LARGE SCALE GENOMIC DNA]</scope>
    <source>
        <strain>CNS-205</strain>
    </source>
</reference>
<sequence>MAKMIAFDEEARRGLERGMNQLADAVKVTLGPKGRNVVLEKKWGAPTITNDGVSIAKEIELEDPYEKIGAELVKEVAKKTDDVAGDGTTTATVLAQAMVREGLRNVAAGANPMALKRGIETAVASVSEELLKLAKDVETKEQIASTASISAGDPSVGEIIAEAMDKVGKEGVITVEESNTFGLELELTEGMRFDKGYISAYFMTDPERMEAVFDDPYILIVNSKISSVKDLLPILEKVMQSGKPLLIIAEDIEGEALATLVVNKVRGTFKSVAVKAPGFGDRRKAMLGDIAILTGGQVISEEVGLKLDAVNLDMVGRARKVVVTKDETTIVDGAGDAEQIQGRVNQIRAEIDKSDSDYDREKLQERLAKLAGGVAVIKVGAATEVELKERKHRIEDAVRNAKAAVEEGIVPGGGVALVQAGKTAFDKLDLTGDEATGAQIVKIALDGPLRQIAVNAGLEGGVVVEHVRGIEAGHGLNAATGGYVDLMAAGIIDPAKVTRSALQNASSIAALFLTTEAVVADKPEKTPAAPAAPGGGEMDF</sequence>
<comment type="function">
    <text evidence="1">Together with its co-chaperonin GroES, plays an essential role in assisting protein folding. The GroEL-GroES system forms a nano-cage that allows encapsulation of the non-native substrate proteins and provides a physical environment optimized to promote and accelerate protein folding.</text>
</comment>
<comment type="catalytic activity">
    <reaction evidence="1">
        <text>ATP + H2O + a folded polypeptide = ADP + phosphate + an unfolded polypeptide.</text>
        <dbReference type="EC" id="5.6.1.7"/>
    </reaction>
</comment>
<comment type="subunit">
    <text evidence="1">Forms a cylinder of 14 subunits composed of two heptameric rings stacked back-to-back. Interacts with the co-chaperonin GroES.</text>
</comment>
<comment type="subcellular location">
    <subcellularLocation>
        <location evidence="1">Cytoplasm</location>
    </subcellularLocation>
</comment>
<comment type="similarity">
    <text evidence="1">Belongs to the chaperonin (HSP60) family.</text>
</comment>